<accession>Q0W1Y5</accession>
<name>RS19_METAR</name>
<reference key="1">
    <citation type="journal article" date="2006" name="Science">
        <title>Genome of rice cluster I archaea -- the key methane producers in the rice rhizosphere.</title>
        <authorList>
            <person name="Erkel C."/>
            <person name="Kube M."/>
            <person name="Reinhardt R."/>
            <person name="Liesack W."/>
        </authorList>
    </citation>
    <scope>NUCLEOTIDE SEQUENCE [LARGE SCALE GENOMIC DNA]</scope>
    <source>
        <strain>DSM 22066 / NBRC 105507 / MRE50</strain>
    </source>
</reference>
<feature type="chain" id="PRO_0000354328" description="Small ribosomal subunit protein uS19">
    <location>
        <begin position="1"/>
        <end position="140"/>
    </location>
</feature>
<organism>
    <name type="scientific">Methanocella arvoryzae (strain DSM 22066 / NBRC 105507 / MRE50)</name>
    <dbReference type="NCBI Taxonomy" id="351160"/>
    <lineage>
        <taxon>Archaea</taxon>
        <taxon>Methanobacteriati</taxon>
        <taxon>Methanobacteriota</taxon>
        <taxon>Stenosarchaea group</taxon>
        <taxon>Methanomicrobia</taxon>
        <taxon>Methanocellales</taxon>
        <taxon>Methanocellaceae</taxon>
        <taxon>Methanocella</taxon>
    </lineage>
</organism>
<proteinExistence type="inferred from homology"/>
<comment type="function">
    <text evidence="1">Protein S19 forms a complex with S13 that binds strongly to the 16S ribosomal RNA.</text>
</comment>
<comment type="similarity">
    <text evidence="1">Belongs to the universal ribosomal protein uS19 family.</text>
</comment>
<keyword id="KW-1185">Reference proteome</keyword>
<keyword id="KW-0687">Ribonucleoprotein</keyword>
<keyword id="KW-0689">Ribosomal protein</keyword>
<keyword id="KW-0694">RNA-binding</keyword>
<keyword id="KW-0699">rRNA-binding</keyword>
<gene>
    <name evidence="1" type="primary">rps19</name>
    <name type="ordered locus">UNCMA_06480</name>
    <name type="ORF">RCIX2545</name>
</gene>
<sequence>MVSKQSKQAGRLPKRKEEFTYRGLTIAEMKKLDMNQVAALLPARQRRKIKREFGEEHQKLLNAVKAGETKIKTHLRDMIILPEMVGVTFEIHNGKEWKAVETTPEMVGHYLGEFALTRHSVSHGSAGIGATRGSKYVPLK</sequence>
<dbReference type="EMBL" id="AM114193">
    <property type="protein sequence ID" value="CAJ37608.1"/>
    <property type="molecule type" value="Genomic_DNA"/>
</dbReference>
<dbReference type="RefSeq" id="WP_012034977.1">
    <property type="nucleotide sequence ID" value="NC_009464.1"/>
</dbReference>
<dbReference type="SMR" id="Q0W1Y5"/>
<dbReference type="STRING" id="351160.RCIX2545"/>
<dbReference type="GeneID" id="5144350"/>
<dbReference type="KEGG" id="rci:RCIX2545"/>
<dbReference type="PATRIC" id="fig|351160.9.peg.675"/>
<dbReference type="eggNOG" id="arCOG04099">
    <property type="taxonomic scope" value="Archaea"/>
</dbReference>
<dbReference type="OrthoDB" id="30559at2157"/>
<dbReference type="Proteomes" id="UP000000663">
    <property type="component" value="Chromosome"/>
</dbReference>
<dbReference type="GO" id="GO:0022627">
    <property type="term" value="C:cytosolic small ribosomal subunit"/>
    <property type="evidence" value="ECO:0007669"/>
    <property type="project" value="TreeGrafter"/>
</dbReference>
<dbReference type="GO" id="GO:0019843">
    <property type="term" value="F:rRNA binding"/>
    <property type="evidence" value="ECO:0007669"/>
    <property type="project" value="UniProtKB-UniRule"/>
</dbReference>
<dbReference type="GO" id="GO:0003735">
    <property type="term" value="F:structural constituent of ribosome"/>
    <property type="evidence" value="ECO:0007669"/>
    <property type="project" value="InterPro"/>
</dbReference>
<dbReference type="GO" id="GO:0000028">
    <property type="term" value="P:ribosomal small subunit assembly"/>
    <property type="evidence" value="ECO:0007669"/>
    <property type="project" value="TreeGrafter"/>
</dbReference>
<dbReference type="GO" id="GO:0006412">
    <property type="term" value="P:translation"/>
    <property type="evidence" value="ECO:0007669"/>
    <property type="project" value="UniProtKB-UniRule"/>
</dbReference>
<dbReference type="Gene3D" id="3.30.860.10">
    <property type="entry name" value="30s Ribosomal Protein S19, Chain A"/>
    <property type="match status" value="1"/>
</dbReference>
<dbReference type="HAMAP" id="MF_00531">
    <property type="entry name" value="Ribosomal_uS19"/>
    <property type="match status" value="1"/>
</dbReference>
<dbReference type="InterPro" id="IPR002222">
    <property type="entry name" value="Ribosomal_uS19"/>
</dbReference>
<dbReference type="InterPro" id="IPR005713">
    <property type="entry name" value="Ribosomal_uS19_euk/arc"/>
</dbReference>
<dbReference type="InterPro" id="IPR023575">
    <property type="entry name" value="Ribosomal_uS19_SF"/>
</dbReference>
<dbReference type="NCBIfam" id="NF003121">
    <property type="entry name" value="PRK04038.1"/>
    <property type="match status" value="1"/>
</dbReference>
<dbReference type="NCBIfam" id="TIGR01025">
    <property type="entry name" value="uS19_arch"/>
    <property type="match status" value="1"/>
</dbReference>
<dbReference type="PANTHER" id="PTHR11880">
    <property type="entry name" value="RIBOSOMAL PROTEIN S19P FAMILY MEMBER"/>
    <property type="match status" value="1"/>
</dbReference>
<dbReference type="PANTHER" id="PTHR11880:SF2">
    <property type="entry name" value="SMALL RIBOSOMAL SUBUNIT PROTEIN US19"/>
    <property type="match status" value="1"/>
</dbReference>
<dbReference type="Pfam" id="PF00203">
    <property type="entry name" value="Ribosomal_S19"/>
    <property type="match status" value="1"/>
</dbReference>
<dbReference type="PIRSF" id="PIRSF002144">
    <property type="entry name" value="Ribosomal_S19"/>
    <property type="match status" value="1"/>
</dbReference>
<dbReference type="PRINTS" id="PR00975">
    <property type="entry name" value="RIBOSOMALS19"/>
</dbReference>
<dbReference type="SUPFAM" id="SSF54570">
    <property type="entry name" value="Ribosomal protein S19"/>
    <property type="match status" value="1"/>
</dbReference>
<evidence type="ECO:0000255" key="1">
    <source>
        <dbReference type="HAMAP-Rule" id="MF_00531"/>
    </source>
</evidence>
<evidence type="ECO:0000305" key="2"/>
<protein>
    <recommendedName>
        <fullName evidence="1">Small ribosomal subunit protein uS19</fullName>
    </recommendedName>
    <alternativeName>
        <fullName evidence="2">30S ribosomal protein S19</fullName>
    </alternativeName>
</protein>